<comment type="function">
    <text evidence="1">Removes the formyl group from the N-terminal Met of newly synthesized proteins. Requires at least a dipeptide for an efficient rate of reaction. N-terminal L-methionine is a prerequisite for activity but the enzyme has broad specificity at other positions.</text>
</comment>
<comment type="catalytic activity">
    <reaction evidence="1">
        <text>N-terminal N-formyl-L-methionyl-[peptide] + H2O = N-terminal L-methionyl-[peptide] + formate</text>
        <dbReference type="Rhea" id="RHEA:24420"/>
        <dbReference type="Rhea" id="RHEA-COMP:10639"/>
        <dbReference type="Rhea" id="RHEA-COMP:10640"/>
        <dbReference type="ChEBI" id="CHEBI:15377"/>
        <dbReference type="ChEBI" id="CHEBI:15740"/>
        <dbReference type="ChEBI" id="CHEBI:49298"/>
        <dbReference type="ChEBI" id="CHEBI:64731"/>
        <dbReference type="EC" id="3.5.1.88"/>
    </reaction>
</comment>
<comment type="cofactor">
    <cofactor evidence="1">
        <name>Fe(2+)</name>
        <dbReference type="ChEBI" id="CHEBI:29033"/>
    </cofactor>
    <text evidence="1">Binds 1 Fe(2+) ion.</text>
</comment>
<comment type="similarity">
    <text evidence="1">Belongs to the polypeptide deformylase family.</text>
</comment>
<proteinExistence type="inferred from homology"/>
<sequence length="170" mass="19391">MSVLQVLHYPDERLRKIAAPVKEVNGEIQRIVDDMFETMYAEEGIGLAATQVDVHQQIIVIDISENRDQRLVLINPELLEKSGETGIEEGCLSIPEQRALVPRAEKVKIRALDRDGKPFELETDGLLAICIQHEMDHLIGKLFVDYLSPLKRQRIRQKLEKMAKLNARAN</sequence>
<keyword id="KW-0378">Hydrolase</keyword>
<keyword id="KW-0408">Iron</keyword>
<keyword id="KW-0479">Metal-binding</keyword>
<keyword id="KW-0648">Protein biosynthesis</keyword>
<dbReference type="EC" id="3.5.1.88" evidence="1"/>
<dbReference type="EMBL" id="CP000668">
    <property type="protein sequence ID" value="ABP38586.1"/>
    <property type="molecule type" value="Genomic_DNA"/>
</dbReference>
<dbReference type="RefSeq" id="WP_002209021.1">
    <property type="nucleotide sequence ID" value="NZ_CP009715.1"/>
</dbReference>
<dbReference type="SMR" id="A4TH23"/>
<dbReference type="GeneID" id="57974362"/>
<dbReference type="KEGG" id="ypp:YPDSF_0164"/>
<dbReference type="PATRIC" id="fig|386656.14.peg.401"/>
<dbReference type="GO" id="GO:0046872">
    <property type="term" value="F:metal ion binding"/>
    <property type="evidence" value="ECO:0007669"/>
    <property type="project" value="UniProtKB-KW"/>
</dbReference>
<dbReference type="GO" id="GO:0042586">
    <property type="term" value="F:peptide deformylase activity"/>
    <property type="evidence" value="ECO:0007669"/>
    <property type="project" value="UniProtKB-UniRule"/>
</dbReference>
<dbReference type="GO" id="GO:0043686">
    <property type="term" value="P:co-translational protein modification"/>
    <property type="evidence" value="ECO:0007669"/>
    <property type="project" value="TreeGrafter"/>
</dbReference>
<dbReference type="GO" id="GO:0006412">
    <property type="term" value="P:translation"/>
    <property type="evidence" value="ECO:0007669"/>
    <property type="project" value="UniProtKB-UniRule"/>
</dbReference>
<dbReference type="CDD" id="cd00487">
    <property type="entry name" value="Pep_deformylase"/>
    <property type="match status" value="1"/>
</dbReference>
<dbReference type="FunFam" id="3.90.45.10:FF:000001">
    <property type="entry name" value="Peptide deformylase"/>
    <property type="match status" value="1"/>
</dbReference>
<dbReference type="Gene3D" id="3.90.45.10">
    <property type="entry name" value="Peptide deformylase"/>
    <property type="match status" value="1"/>
</dbReference>
<dbReference type="HAMAP" id="MF_00163">
    <property type="entry name" value="Pep_deformylase"/>
    <property type="match status" value="1"/>
</dbReference>
<dbReference type="InterPro" id="IPR023635">
    <property type="entry name" value="Peptide_deformylase"/>
</dbReference>
<dbReference type="InterPro" id="IPR036821">
    <property type="entry name" value="Peptide_deformylase_sf"/>
</dbReference>
<dbReference type="NCBIfam" id="TIGR00079">
    <property type="entry name" value="pept_deformyl"/>
    <property type="match status" value="1"/>
</dbReference>
<dbReference type="NCBIfam" id="NF001159">
    <property type="entry name" value="PRK00150.1-3"/>
    <property type="match status" value="1"/>
</dbReference>
<dbReference type="PANTHER" id="PTHR10458">
    <property type="entry name" value="PEPTIDE DEFORMYLASE"/>
    <property type="match status" value="1"/>
</dbReference>
<dbReference type="PANTHER" id="PTHR10458:SF21">
    <property type="entry name" value="PEPTIDE DEFORMYLASE"/>
    <property type="match status" value="1"/>
</dbReference>
<dbReference type="Pfam" id="PF01327">
    <property type="entry name" value="Pep_deformylase"/>
    <property type="match status" value="1"/>
</dbReference>
<dbReference type="PIRSF" id="PIRSF004749">
    <property type="entry name" value="Pep_def"/>
    <property type="match status" value="1"/>
</dbReference>
<dbReference type="PRINTS" id="PR01576">
    <property type="entry name" value="PDEFORMYLASE"/>
</dbReference>
<dbReference type="SUPFAM" id="SSF56420">
    <property type="entry name" value="Peptide deformylase"/>
    <property type="match status" value="1"/>
</dbReference>
<name>DEF_YERPP</name>
<accession>A4TH23</accession>
<organism>
    <name type="scientific">Yersinia pestis (strain Pestoides F)</name>
    <dbReference type="NCBI Taxonomy" id="386656"/>
    <lineage>
        <taxon>Bacteria</taxon>
        <taxon>Pseudomonadati</taxon>
        <taxon>Pseudomonadota</taxon>
        <taxon>Gammaproteobacteria</taxon>
        <taxon>Enterobacterales</taxon>
        <taxon>Yersiniaceae</taxon>
        <taxon>Yersinia</taxon>
    </lineage>
</organism>
<evidence type="ECO:0000255" key="1">
    <source>
        <dbReference type="HAMAP-Rule" id="MF_00163"/>
    </source>
</evidence>
<reference key="1">
    <citation type="submission" date="2007-02" db="EMBL/GenBank/DDBJ databases">
        <title>Complete sequence of chromosome of Yersinia pestis Pestoides F.</title>
        <authorList>
            <consortium name="US DOE Joint Genome Institute"/>
            <person name="Copeland A."/>
            <person name="Lucas S."/>
            <person name="Lapidus A."/>
            <person name="Barry K."/>
            <person name="Detter J.C."/>
            <person name="Glavina del Rio T."/>
            <person name="Hammon N."/>
            <person name="Israni S."/>
            <person name="Dalin E."/>
            <person name="Tice H."/>
            <person name="Pitluck S."/>
            <person name="Di Bartolo G."/>
            <person name="Chain P."/>
            <person name="Malfatti S."/>
            <person name="Shin M."/>
            <person name="Vergez L."/>
            <person name="Schmutz J."/>
            <person name="Larimer F."/>
            <person name="Land M."/>
            <person name="Hauser L."/>
            <person name="Worsham P."/>
            <person name="Chu M."/>
            <person name="Bearden S."/>
            <person name="Garcia E."/>
            <person name="Richardson P."/>
        </authorList>
    </citation>
    <scope>NUCLEOTIDE SEQUENCE [LARGE SCALE GENOMIC DNA]</scope>
    <source>
        <strain>Pestoides F</strain>
    </source>
</reference>
<feature type="chain" id="PRO_0000301129" description="Peptide deformylase">
    <location>
        <begin position="1"/>
        <end position="170"/>
    </location>
</feature>
<feature type="active site" evidence="1">
    <location>
        <position position="134"/>
    </location>
</feature>
<feature type="binding site" evidence="1">
    <location>
        <position position="91"/>
    </location>
    <ligand>
        <name>Fe cation</name>
        <dbReference type="ChEBI" id="CHEBI:24875"/>
    </ligand>
</feature>
<feature type="binding site" evidence="1">
    <location>
        <position position="133"/>
    </location>
    <ligand>
        <name>Fe cation</name>
        <dbReference type="ChEBI" id="CHEBI:24875"/>
    </ligand>
</feature>
<feature type="binding site" evidence="1">
    <location>
        <position position="137"/>
    </location>
    <ligand>
        <name>Fe cation</name>
        <dbReference type="ChEBI" id="CHEBI:24875"/>
    </ligand>
</feature>
<gene>
    <name evidence="1" type="primary">def</name>
    <name type="ordered locus">YPDSF_0164</name>
</gene>
<protein>
    <recommendedName>
        <fullName evidence="1">Peptide deformylase</fullName>
        <shortName evidence="1">PDF</shortName>
        <ecNumber evidence="1">3.5.1.88</ecNumber>
    </recommendedName>
    <alternativeName>
        <fullName evidence="1">Polypeptide deformylase</fullName>
    </alternativeName>
</protein>